<accession>C1FMU0</accession>
<organism>
    <name type="scientific">Clostridium botulinum (strain Kyoto / Type A2)</name>
    <dbReference type="NCBI Taxonomy" id="536232"/>
    <lineage>
        <taxon>Bacteria</taxon>
        <taxon>Bacillati</taxon>
        <taxon>Bacillota</taxon>
        <taxon>Clostridia</taxon>
        <taxon>Eubacteriales</taxon>
        <taxon>Clostridiaceae</taxon>
        <taxon>Clostridium</taxon>
    </lineage>
</organism>
<dbReference type="EMBL" id="CP001581">
    <property type="protein sequence ID" value="ACO83949.1"/>
    <property type="molecule type" value="Genomic_DNA"/>
</dbReference>
<dbReference type="RefSeq" id="WP_003357467.1">
    <property type="nucleotide sequence ID" value="NC_012563.1"/>
</dbReference>
<dbReference type="SMR" id="C1FMU0"/>
<dbReference type="GeneID" id="5187724"/>
<dbReference type="KEGG" id="cby:CLM_3937"/>
<dbReference type="eggNOG" id="COG0198">
    <property type="taxonomic scope" value="Bacteria"/>
</dbReference>
<dbReference type="HOGENOM" id="CLU_093315_2_3_9"/>
<dbReference type="Proteomes" id="UP000001374">
    <property type="component" value="Chromosome"/>
</dbReference>
<dbReference type="GO" id="GO:1990904">
    <property type="term" value="C:ribonucleoprotein complex"/>
    <property type="evidence" value="ECO:0007669"/>
    <property type="project" value="UniProtKB-KW"/>
</dbReference>
<dbReference type="GO" id="GO:0005840">
    <property type="term" value="C:ribosome"/>
    <property type="evidence" value="ECO:0007669"/>
    <property type="project" value="UniProtKB-KW"/>
</dbReference>
<dbReference type="GO" id="GO:0019843">
    <property type="term" value="F:rRNA binding"/>
    <property type="evidence" value="ECO:0007669"/>
    <property type="project" value="UniProtKB-UniRule"/>
</dbReference>
<dbReference type="GO" id="GO:0003735">
    <property type="term" value="F:structural constituent of ribosome"/>
    <property type="evidence" value="ECO:0007669"/>
    <property type="project" value="InterPro"/>
</dbReference>
<dbReference type="GO" id="GO:0006412">
    <property type="term" value="P:translation"/>
    <property type="evidence" value="ECO:0007669"/>
    <property type="project" value="UniProtKB-UniRule"/>
</dbReference>
<dbReference type="CDD" id="cd06089">
    <property type="entry name" value="KOW_RPL26"/>
    <property type="match status" value="1"/>
</dbReference>
<dbReference type="FunFam" id="2.30.30.30:FF:000004">
    <property type="entry name" value="50S ribosomal protein L24"/>
    <property type="match status" value="1"/>
</dbReference>
<dbReference type="Gene3D" id="2.30.30.30">
    <property type="match status" value="1"/>
</dbReference>
<dbReference type="HAMAP" id="MF_01326_B">
    <property type="entry name" value="Ribosomal_uL24_B"/>
    <property type="match status" value="1"/>
</dbReference>
<dbReference type="InterPro" id="IPR005824">
    <property type="entry name" value="KOW"/>
</dbReference>
<dbReference type="InterPro" id="IPR014722">
    <property type="entry name" value="Rib_uL2_dom2"/>
</dbReference>
<dbReference type="InterPro" id="IPR003256">
    <property type="entry name" value="Ribosomal_uL24"/>
</dbReference>
<dbReference type="InterPro" id="IPR041988">
    <property type="entry name" value="Ribosomal_uL24_KOW"/>
</dbReference>
<dbReference type="InterPro" id="IPR008991">
    <property type="entry name" value="Translation_prot_SH3-like_sf"/>
</dbReference>
<dbReference type="NCBIfam" id="TIGR01079">
    <property type="entry name" value="rplX_bact"/>
    <property type="match status" value="1"/>
</dbReference>
<dbReference type="PANTHER" id="PTHR12903">
    <property type="entry name" value="MITOCHONDRIAL RIBOSOMAL PROTEIN L24"/>
    <property type="match status" value="1"/>
</dbReference>
<dbReference type="Pfam" id="PF00467">
    <property type="entry name" value="KOW"/>
    <property type="match status" value="1"/>
</dbReference>
<dbReference type="Pfam" id="PF17136">
    <property type="entry name" value="ribosomal_L24"/>
    <property type="match status" value="1"/>
</dbReference>
<dbReference type="SMART" id="SM00739">
    <property type="entry name" value="KOW"/>
    <property type="match status" value="1"/>
</dbReference>
<dbReference type="SUPFAM" id="SSF50104">
    <property type="entry name" value="Translation proteins SH3-like domain"/>
    <property type="match status" value="1"/>
</dbReference>
<keyword id="KW-0687">Ribonucleoprotein</keyword>
<keyword id="KW-0689">Ribosomal protein</keyword>
<keyword id="KW-0694">RNA-binding</keyword>
<keyword id="KW-0699">rRNA-binding</keyword>
<reference key="1">
    <citation type="submission" date="2008-10" db="EMBL/GenBank/DDBJ databases">
        <title>Genome sequence of Clostridium botulinum A2 Kyoto.</title>
        <authorList>
            <person name="Shrivastava S."/>
            <person name="Brinkac L.M."/>
            <person name="Brown J.L."/>
            <person name="Bruce D."/>
            <person name="Detter C.C."/>
            <person name="Johnson E.A."/>
            <person name="Munk C.A."/>
            <person name="Smith L.A."/>
            <person name="Smith T.J."/>
            <person name="Sutton G."/>
            <person name="Brettin T.S."/>
        </authorList>
    </citation>
    <scope>NUCLEOTIDE SEQUENCE [LARGE SCALE GENOMIC DNA]</scope>
    <source>
        <strain>Kyoto / Type A2</strain>
    </source>
</reference>
<protein>
    <recommendedName>
        <fullName evidence="1">Large ribosomal subunit protein uL24</fullName>
    </recommendedName>
    <alternativeName>
        <fullName evidence="2">50S ribosomal protein L24</fullName>
    </alternativeName>
</protein>
<gene>
    <name evidence="1" type="primary">rplX</name>
    <name type="ordered locus">CLM_3937</name>
</gene>
<proteinExistence type="inferred from homology"/>
<comment type="function">
    <text evidence="1">One of two assembly initiator proteins, it binds directly to the 5'-end of the 23S rRNA, where it nucleates assembly of the 50S subunit.</text>
</comment>
<comment type="function">
    <text evidence="1">One of the proteins that surrounds the polypeptide exit tunnel on the outside of the subunit.</text>
</comment>
<comment type="subunit">
    <text evidence="1">Part of the 50S ribosomal subunit.</text>
</comment>
<comment type="similarity">
    <text evidence="1">Belongs to the universal ribosomal protein uL24 family.</text>
</comment>
<feature type="chain" id="PRO_1000165937" description="Large ribosomal subunit protein uL24">
    <location>
        <begin position="1"/>
        <end position="105"/>
    </location>
</feature>
<name>RL24_CLOBJ</name>
<sequence>MSKIHVRKKDTVVVISGKDKSKIGEVLSVLPKKGKVIVKDVNVVTKHQKPNRENMQGGIIHKEAPIFSSKVMLYCDKCKSATRISNKILEDGTKVRVCKKCGETF</sequence>
<evidence type="ECO:0000255" key="1">
    <source>
        <dbReference type="HAMAP-Rule" id="MF_01326"/>
    </source>
</evidence>
<evidence type="ECO:0000305" key="2"/>